<feature type="signal peptide" evidence="2">
    <location>
        <begin position="1"/>
        <end position="22"/>
    </location>
</feature>
<feature type="chain" id="PRO_0000025570" description="Methanol dehydrogenase [cytochrome c] subunit 2">
    <location>
        <begin position="23"/>
        <end position="91"/>
    </location>
</feature>
<feature type="disulfide bond">
    <location>
        <begin position="28"/>
        <end position="34"/>
    </location>
</feature>
<feature type="sequence conflict" description="In Ref. 2; AA sequence." evidence="3" ref="2">
    <original>N</original>
    <variation>T</variation>
    <location>
        <position position="27"/>
    </location>
</feature>
<feature type="sequence conflict" description="In Ref. 2; AA sequence." evidence="3" ref="2">
    <original>P</original>
    <variation>A</variation>
    <location>
        <position position="31"/>
    </location>
</feature>
<feature type="sequence conflict" description="In Ref. 2; AA sequence." evidence="3" ref="2">
    <original>N</original>
    <variation>A</variation>
    <location>
        <position position="37"/>
    </location>
</feature>
<feature type="helix" evidence="4">
    <location>
        <begin position="56"/>
        <end position="59"/>
    </location>
</feature>
<feature type="helix" evidence="4">
    <location>
        <begin position="61"/>
        <end position="83"/>
    </location>
</feature>
<keyword id="KW-0002">3D-structure</keyword>
<keyword id="KW-0997">Cell inner membrane</keyword>
<keyword id="KW-1003">Cell membrane</keyword>
<keyword id="KW-0903">Direct protein sequencing</keyword>
<keyword id="KW-1015">Disulfide bond</keyword>
<keyword id="KW-0472">Membrane</keyword>
<keyword id="KW-0485">Methanol utilization</keyword>
<keyword id="KW-0560">Oxidoreductase</keyword>
<keyword id="KW-0732">Signal</keyword>
<organism>
    <name type="scientific">Methylophilus methylotrophus</name>
    <name type="common">Bacterium W3A1</name>
    <dbReference type="NCBI Taxonomy" id="17"/>
    <lineage>
        <taxon>Bacteria</taxon>
        <taxon>Pseudomonadati</taxon>
        <taxon>Pseudomonadota</taxon>
        <taxon>Betaproteobacteria</taxon>
        <taxon>Nitrosomonadales</taxon>
        <taxon>Methylophilaceae</taxon>
        <taxon>Methylophilus</taxon>
    </lineage>
</organism>
<comment type="function">
    <text evidence="1">Catalyzes the oxidation of primary alcohols including methanol.</text>
</comment>
<comment type="catalytic activity">
    <reaction>
        <text>2 Fe(III)-[cytochrome cL] + a primary alcohol = 2 Fe(II)-[cytochrome cL] + an aldehyde + 2 H(+)</text>
        <dbReference type="Rhea" id="RHEA:51004"/>
        <dbReference type="Rhea" id="RHEA-COMP:12863"/>
        <dbReference type="Rhea" id="RHEA-COMP:12864"/>
        <dbReference type="ChEBI" id="CHEBI:15378"/>
        <dbReference type="ChEBI" id="CHEBI:15734"/>
        <dbReference type="ChEBI" id="CHEBI:17478"/>
        <dbReference type="ChEBI" id="CHEBI:29033"/>
        <dbReference type="ChEBI" id="CHEBI:29034"/>
        <dbReference type="EC" id="1.1.2.7"/>
    </reaction>
</comment>
<comment type="subunit">
    <text>Heterotetramer composed of 2 alpha and 2 beta subunits.</text>
</comment>
<comment type="subcellular location">
    <subcellularLocation>
        <location>Cell inner membrane</location>
        <topology>Peripheral membrane protein</topology>
        <orientation>Periplasmic side</orientation>
    </subcellularLocation>
    <text>Periplasmic, but associated with inner membrane.</text>
</comment>
<comment type="similarity">
    <text evidence="3">Belongs to the methanol dehydrogenase subunit 2 family.</text>
</comment>
<comment type="sequence caution" evidence="3">
    <conflict type="erroneous initiation">
        <sequence resource="EMBL-CDS" id="AAA83766"/>
    </conflict>
</comment>
<sequence>MKHVLTLLALASVFAVSNQALAYDGQNCKEPGNCWENKPGYPEKIAGSKYDPKHDPVELNKQEESIKAMDARNAKRIANAKSSGNFVFDVK</sequence>
<evidence type="ECO:0000250" key="1"/>
<evidence type="ECO:0000269" key="2">
    <source>
    </source>
</evidence>
<evidence type="ECO:0000305" key="3"/>
<evidence type="ECO:0007829" key="4">
    <source>
        <dbReference type="PDB" id="2AD6"/>
    </source>
</evidence>
<dbReference type="EC" id="1.1.2.7"/>
<dbReference type="EMBL" id="U41041">
    <property type="protein sequence ID" value="AAA83766.1"/>
    <property type="status" value="ALT_INIT"/>
    <property type="molecule type" value="Genomic_DNA"/>
</dbReference>
<dbReference type="PDB" id="1G72">
    <property type="method" value="X-ray"/>
    <property type="resolution" value="1.90 A"/>
    <property type="chains" value="B/D=23-91"/>
</dbReference>
<dbReference type="PDB" id="2AD6">
    <property type="method" value="X-ray"/>
    <property type="resolution" value="1.50 A"/>
    <property type="chains" value="B/D=23-91"/>
</dbReference>
<dbReference type="PDB" id="2AD7">
    <property type="method" value="X-ray"/>
    <property type="resolution" value="1.50 A"/>
    <property type="chains" value="B/D=23-91"/>
</dbReference>
<dbReference type="PDB" id="2AD8">
    <property type="method" value="X-ray"/>
    <property type="resolution" value="1.60 A"/>
    <property type="chains" value="B/D=23-91"/>
</dbReference>
<dbReference type="PDB" id="4AAH">
    <property type="method" value="X-ray"/>
    <property type="resolution" value="2.40 A"/>
    <property type="chains" value="B/D=23-91"/>
</dbReference>
<dbReference type="PDBsum" id="1G72"/>
<dbReference type="PDBsum" id="2AD6"/>
<dbReference type="PDBsum" id="2AD7"/>
<dbReference type="PDBsum" id="2AD8"/>
<dbReference type="PDBsum" id="4AAH"/>
<dbReference type="SMR" id="P38540"/>
<dbReference type="STRING" id="1122236.GCA_000378225_01350"/>
<dbReference type="BRENDA" id="1.1.2.7">
    <property type="organism ID" value="3319"/>
</dbReference>
<dbReference type="BRENDA" id="1.2.2.B2">
    <property type="organism ID" value="3319"/>
</dbReference>
<dbReference type="SABIO-RK" id="P38540"/>
<dbReference type="EvolutionaryTrace" id="P38540"/>
<dbReference type="GO" id="GO:0005886">
    <property type="term" value="C:plasma membrane"/>
    <property type="evidence" value="ECO:0007669"/>
    <property type="project" value="UniProtKB-SubCell"/>
</dbReference>
<dbReference type="GO" id="GO:0052933">
    <property type="term" value="F:alcohol dehydrogenase (cytochrome c(L)) activity"/>
    <property type="evidence" value="ECO:0007669"/>
    <property type="project" value="UniProtKB-EC"/>
</dbReference>
<dbReference type="GO" id="GO:0004022">
    <property type="term" value="F:alcohol dehydrogenase (NAD+) activity"/>
    <property type="evidence" value="ECO:0007669"/>
    <property type="project" value="InterPro"/>
</dbReference>
<dbReference type="GO" id="GO:0015946">
    <property type="term" value="P:methanol oxidation"/>
    <property type="evidence" value="ECO:0007669"/>
    <property type="project" value="InterPro"/>
</dbReference>
<dbReference type="Gene3D" id="4.10.160.10">
    <property type="entry name" value="Methanol dehydrogenase, beta subunit"/>
    <property type="match status" value="1"/>
</dbReference>
<dbReference type="InterPro" id="IPR003420">
    <property type="entry name" value="Meth_DH_bsu"/>
</dbReference>
<dbReference type="InterPro" id="IPR036557">
    <property type="entry name" value="Meth_DH_bsu_sf"/>
</dbReference>
<dbReference type="Pfam" id="PF02315">
    <property type="entry name" value="MDH"/>
    <property type="match status" value="1"/>
</dbReference>
<dbReference type="PIRSF" id="PIRSF029163">
    <property type="entry name" value="Meth_DH_beta"/>
    <property type="match status" value="1"/>
</dbReference>
<dbReference type="SUPFAM" id="SSF48666">
    <property type="entry name" value="Methanol dehydrogenase subunit"/>
    <property type="match status" value="1"/>
</dbReference>
<accession>P38540</accession>
<accession>Q59541</accession>
<reference key="1">
    <citation type="journal article" date="1996" name="J. Mol. Biol.">
        <title>Determination of the gene sequence and the three-dimensional structure at 2.4 angstroms resolution of methanol dehydrogenase from Methylophilus W3A1.</title>
        <authorList>
            <person name="Xia Z.-X."/>
            <person name="Dai W.-W."/>
            <person name="Zhang Y.-F."/>
            <person name="White S.A."/>
            <person name="Boyd G.D."/>
            <person name="Mathews F.S."/>
        </authorList>
    </citation>
    <scope>NUCLEOTIDE SEQUENCE [GENOMIC DNA]</scope>
    <scope>X-RAY CRYSTALLOGRAPHY (2.4 ANGSTROMS)</scope>
</reference>
<reference key="2">
    <citation type="journal article" date="1992" name="Biochim. Biophys. Acta">
        <title>The interaction of methanol dehydrogenase and its electron acceptor, cytochrome cL in methylotrophic bacteria.</title>
        <authorList>
            <person name="Cox J.M."/>
            <person name="Day D.J."/>
            <person name="Anthony C."/>
        </authorList>
    </citation>
    <scope>PROTEIN SEQUENCE OF 23-53</scope>
    <source>
        <strain>ATCC 53528 / DSM 5691 / CCUG 58724 / LMG 6787 / NCIMB 10515 / AS1</strain>
    </source>
</reference>
<reference key="3">
    <citation type="journal article" date="1993" name="Biochemistry">
        <title>The active site structure of the calcium-containing quinoprotein methanol dehydrogenase.</title>
        <authorList>
            <person name="White S.A."/>
            <person name="Boyd G.D."/>
            <person name="Mathews F.S."/>
            <person name="Xia Z.-X."/>
            <person name="Dai W.-W."/>
            <person name="Zhang Y.-F."/>
            <person name="Davidson V.L."/>
        </authorList>
    </citation>
    <scope>X-RAY CRYSTALLOGRAPHY (2.4 ANGSTROMS)</scope>
</reference>
<reference key="4">
    <citation type="journal article" date="1992" name="J. Biol. Chem.">
        <title>The three-dimensional structures of methanol dehydrogenase from two methylotrophic bacteria at 2.6-A resolution.</title>
        <authorList>
            <person name="Xia Z.-X."/>
            <person name="Dai W.-W."/>
            <person name="Xiong J.-P."/>
            <person name="Hao Z.-P."/>
            <person name="Davidson V.L."/>
            <person name="White S.A."/>
            <person name="Mathews F.S."/>
        </authorList>
    </citation>
    <scope>X-RAY CRYSTALLOGRAPHY (2.6 ANGSTROMS)</scope>
</reference>
<protein>
    <recommendedName>
        <fullName>Methanol dehydrogenase [cytochrome c] subunit 2</fullName>
        <ecNumber>1.1.2.7</ecNumber>
    </recommendedName>
    <alternativeName>
        <fullName>MDH small subunit beta</fullName>
    </alternativeName>
    <alternativeName>
        <fullName>MDH-associated peptide</fullName>
    </alternativeName>
    <alternativeName>
        <fullName>MEDH</fullName>
    </alternativeName>
</protein>
<name>DHM2_METME</name>
<proteinExistence type="evidence at protein level"/>
<gene>
    <name type="primary">moxI</name>
</gene>